<gene>
    <name type="primary">PME5</name>
    <name type="synonym">ARATH67</name>
    <name type="synonym">VGD1</name>
    <name type="ordered locus">At2g47040</name>
    <name type="ORF">F14M4.13</name>
</gene>
<protein>
    <recommendedName>
        <fullName>Pectinesterase 5</fullName>
        <shortName>PE 5</shortName>
        <ecNumber evidence="5">3.1.1.11</ecNumber>
    </recommendedName>
    <alternativeName>
        <fullName>Pectin methylesterase 5</fullName>
        <shortName>AtPME5</shortName>
    </alternativeName>
    <alternativeName>
        <fullName>Pectin methylesterase 67</fullName>
        <shortName>AtPME67</shortName>
    </alternativeName>
    <alternativeName>
        <fullName>Protein VANGUARD 1</fullName>
    </alternativeName>
</protein>
<accession>Q5MFV8</accession>
<accession>O80721</accession>
<accession>Q9SMV9</accession>
<evidence type="ECO:0000250" key="1"/>
<evidence type="ECO:0000255" key="2"/>
<evidence type="ECO:0000255" key="3">
    <source>
        <dbReference type="PROSITE-ProRule" id="PRU10040"/>
    </source>
</evidence>
<evidence type="ECO:0000256" key="4">
    <source>
        <dbReference type="SAM" id="MobiDB-lite"/>
    </source>
</evidence>
<evidence type="ECO:0000269" key="5">
    <source>
    </source>
</evidence>
<evidence type="ECO:0000269" key="6">
    <source>
    </source>
</evidence>
<evidence type="ECO:0000269" key="7">
    <source>
    </source>
</evidence>
<evidence type="ECO:0000269" key="8">
    <source>
    </source>
</evidence>
<evidence type="ECO:0000305" key="9"/>
<evidence type="ECO:0000305" key="10">
    <source>
    </source>
</evidence>
<evidence type="ECO:0000305" key="11">
    <source>
    </source>
</evidence>
<dbReference type="EC" id="3.1.1.11" evidence="5"/>
<dbReference type="EMBL" id="AY830948">
    <property type="protein sequence ID" value="AAV91508.1"/>
    <property type="molecule type" value="mRNA"/>
</dbReference>
<dbReference type="EMBL" id="AJ250430">
    <property type="protein sequence ID" value="CAB58974.1"/>
    <property type="molecule type" value="mRNA"/>
</dbReference>
<dbReference type="EMBL" id="AC004411">
    <property type="protein sequence ID" value="AAC34240.1"/>
    <property type="molecule type" value="Genomic_DNA"/>
</dbReference>
<dbReference type="EMBL" id="CP002685">
    <property type="protein sequence ID" value="AEC10791.1"/>
    <property type="molecule type" value="Genomic_DNA"/>
</dbReference>
<dbReference type="EMBL" id="AY091768">
    <property type="protein sequence ID" value="AAM10316.1"/>
    <property type="molecule type" value="mRNA"/>
</dbReference>
<dbReference type="EMBL" id="BT001120">
    <property type="protein sequence ID" value="AAN64511.1"/>
    <property type="molecule type" value="mRNA"/>
</dbReference>
<dbReference type="PIR" id="T02183">
    <property type="entry name" value="T02183"/>
</dbReference>
<dbReference type="PIR" id="T52327">
    <property type="entry name" value="T52327"/>
</dbReference>
<dbReference type="RefSeq" id="NP_182227.1">
    <property type="nucleotide sequence ID" value="NM_130272.4"/>
</dbReference>
<dbReference type="SMR" id="Q5MFV8"/>
<dbReference type="BioGRID" id="4653">
    <property type="interactions" value="2"/>
</dbReference>
<dbReference type="FunCoup" id="Q5MFV8">
    <property type="interactions" value="58"/>
</dbReference>
<dbReference type="STRING" id="3702.Q5MFV8"/>
<dbReference type="GlyCosmos" id="Q5MFV8">
    <property type="glycosylation" value="3 sites, No reported glycans"/>
</dbReference>
<dbReference type="GlyGen" id="Q5MFV8">
    <property type="glycosylation" value="3 sites"/>
</dbReference>
<dbReference type="PaxDb" id="3702-AT2G47040.1"/>
<dbReference type="ProteomicsDB" id="234777"/>
<dbReference type="EnsemblPlants" id="AT2G47040.1">
    <property type="protein sequence ID" value="AT2G47040.1"/>
    <property type="gene ID" value="AT2G47040"/>
</dbReference>
<dbReference type="GeneID" id="819318"/>
<dbReference type="Gramene" id="AT2G47040.1">
    <property type="protein sequence ID" value="AT2G47040.1"/>
    <property type="gene ID" value="AT2G47040"/>
</dbReference>
<dbReference type="KEGG" id="ath:AT2G47040"/>
<dbReference type="Araport" id="AT2G47040"/>
<dbReference type="TAIR" id="AT2G47040">
    <property type="gene designation" value="VGD1"/>
</dbReference>
<dbReference type="eggNOG" id="ENOG502QUTX">
    <property type="taxonomic scope" value="Eukaryota"/>
</dbReference>
<dbReference type="HOGENOM" id="CLU_012243_9_0_1"/>
<dbReference type="InParanoid" id="Q5MFV8"/>
<dbReference type="OMA" id="FCQATEF"/>
<dbReference type="PhylomeDB" id="Q5MFV8"/>
<dbReference type="BioCyc" id="ARA:AT2G47040-MONOMER"/>
<dbReference type="BRENDA" id="3.1.1.11">
    <property type="organism ID" value="399"/>
</dbReference>
<dbReference type="UniPathway" id="UPA00545">
    <property type="reaction ID" value="UER00823"/>
</dbReference>
<dbReference type="PRO" id="PR:Q5MFV8"/>
<dbReference type="Proteomes" id="UP000006548">
    <property type="component" value="Chromosome 2"/>
</dbReference>
<dbReference type="ExpressionAtlas" id="Q5MFV8">
    <property type="expression patterns" value="baseline and differential"/>
</dbReference>
<dbReference type="GO" id="GO:0005576">
    <property type="term" value="C:extracellular region"/>
    <property type="evidence" value="ECO:0007669"/>
    <property type="project" value="UniProtKB-KW"/>
</dbReference>
<dbReference type="GO" id="GO:0000139">
    <property type="term" value="C:Golgi membrane"/>
    <property type="evidence" value="ECO:0000314"/>
    <property type="project" value="UniProtKB"/>
</dbReference>
<dbReference type="GO" id="GO:0005886">
    <property type="term" value="C:plasma membrane"/>
    <property type="evidence" value="ECO:0007669"/>
    <property type="project" value="UniProtKB-SubCell"/>
</dbReference>
<dbReference type="GO" id="GO:0090406">
    <property type="term" value="C:pollen tube"/>
    <property type="evidence" value="ECO:0000314"/>
    <property type="project" value="TAIR"/>
</dbReference>
<dbReference type="GO" id="GO:0004857">
    <property type="term" value="F:enzyme inhibitor activity"/>
    <property type="evidence" value="ECO:0007669"/>
    <property type="project" value="InterPro"/>
</dbReference>
<dbReference type="GO" id="GO:0030599">
    <property type="term" value="F:pectinesterase activity"/>
    <property type="evidence" value="ECO:0000315"/>
    <property type="project" value="UniProtKB"/>
</dbReference>
<dbReference type="GO" id="GO:0042545">
    <property type="term" value="P:cell wall modification"/>
    <property type="evidence" value="ECO:0007669"/>
    <property type="project" value="InterPro"/>
</dbReference>
<dbReference type="GO" id="GO:0045490">
    <property type="term" value="P:pectin catabolic process"/>
    <property type="evidence" value="ECO:0007669"/>
    <property type="project" value="UniProtKB-UniPathway"/>
</dbReference>
<dbReference type="GO" id="GO:0009860">
    <property type="term" value="P:pollen tube growth"/>
    <property type="evidence" value="ECO:0000304"/>
    <property type="project" value="TAIR"/>
</dbReference>
<dbReference type="CDD" id="cd15798">
    <property type="entry name" value="PMEI-like_3"/>
    <property type="match status" value="1"/>
</dbReference>
<dbReference type="FunFam" id="1.20.140.40:FF:000016">
    <property type="entry name" value="Pectinesterase"/>
    <property type="match status" value="1"/>
</dbReference>
<dbReference type="FunFam" id="2.160.20.10:FF:000029">
    <property type="entry name" value="Pectinesterase 4"/>
    <property type="match status" value="1"/>
</dbReference>
<dbReference type="Gene3D" id="1.20.140.40">
    <property type="entry name" value="Invertase/pectin methylesterase inhibitor family protein"/>
    <property type="match status" value="1"/>
</dbReference>
<dbReference type="Gene3D" id="2.160.20.10">
    <property type="entry name" value="Single-stranded right-handed beta-helix, Pectin lyase-like"/>
    <property type="match status" value="1"/>
</dbReference>
<dbReference type="InterPro" id="IPR035513">
    <property type="entry name" value="Invertase/methylesterase_inhib"/>
</dbReference>
<dbReference type="InterPro" id="IPR012334">
    <property type="entry name" value="Pectin_lyas_fold"/>
</dbReference>
<dbReference type="InterPro" id="IPR011050">
    <property type="entry name" value="Pectin_lyase_fold/virulence"/>
</dbReference>
<dbReference type="InterPro" id="IPR033131">
    <property type="entry name" value="Pectinesterase_Asp_AS"/>
</dbReference>
<dbReference type="InterPro" id="IPR000070">
    <property type="entry name" value="Pectinesterase_cat"/>
</dbReference>
<dbReference type="InterPro" id="IPR006501">
    <property type="entry name" value="Pectinesterase_inhib_dom"/>
</dbReference>
<dbReference type="InterPro" id="IPR018040">
    <property type="entry name" value="Pectinesterase_Tyr_AS"/>
</dbReference>
<dbReference type="NCBIfam" id="TIGR01614">
    <property type="entry name" value="PME_inhib"/>
    <property type="match status" value="1"/>
</dbReference>
<dbReference type="PANTHER" id="PTHR31707">
    <property type="entry name" value="PECTINESTERASE"/>
    <property type="match status" value="1"/>
</dbReference>
<dbReference type="Pfam" id="PF01095">
    <property type="entry name" value="Pectinesterase"/>
    <property type="match status" value="1"/>
</dbReference>
<dbReference type="Pfam" id="PF04043">
    <property type="entry name" value="PMEI"/>
    <property type="match status" value="1"/>
</dbReference>
<dbReference type="SMART" id="SM00856">
    <property type="entry name" value="PMEI"/>
    <property type="match status" value="1"/>
</dbReference>
<dbReference type="SUPFAM" id="SSF51126">
    <property type="entry name" value="Pectin lyase-like"/>
    <property type="match status" value="1"/>
</dbReference>
<dbReference type="SUPFAM" id="SSF101148">
    <property type="entry name" value="Plant invertase/pectin methylesterase inhibitor"/>
    <property type="match status" value="1"/>
</dbReference>
<dbReference type="PROSITE" id="PS00800">
    <property type="entry name" value="PECTINESTERASE_1"/>
    <property type="match status" value="1"/>
</dbReference>
<dbReference type="PROSITE" id="PS00503">
    <property type="entry name" value="PECTINESTERASE_2"/>
    <property type="match status" value="1"/>
</dbReference>
<proteinExistence type="evidence at protein level"/>
<feature type="signal peptide" evidence="2">
    <location>
        <begin position="1"/>
        <end position="24"/>
    </location>
</feature>
<feature type="chain" id="PRO_0000023477" description="Pectinesterase 5">
    <location>
        <begin position="25"/>
        <end position="595"/>
    </location>
</feature>
<feature type="region of interest" description="Disordered" evidence="4">
    <location>
        <begin position="215"/>
        <end position="239"/>
    </location>
</feature>
<feature type="short sequence motif" description="RRLL cleavage motif" evidence="11">
    <location>
        <begin position="243"/>
        <end position="246"/>
    </location>
</feature>
<feature type="short sequence motif" description="RKLM cleavage motif" evidence="11">
    <location>
        <begin position="263"/>
        <end position="266"/>
    </location>
</feature>
<feature type="compositionally biased region" description="Low complexity" evidence="4">
    <location>
        <begin position="227"/>
        <end position="239"/>
    </location>
</feature>
<feature type="active site" description="Proton donor" evidence="3">
    <location>
        <position position="413"/>
    </location>
</feature>
<feature type="active site" description="Nucleophile" evidence="3">
    <location>
        <position position="434"/>
    </location>
</feature>
<feature type="binding site" evidence="1">
    <location>
        <position position="360"/>
    </location>
    <ligand>
        <name>substrate</name>
    </ligand>
</feature>
<feature type="binding site" evidence="1">
    <location>
        <position position="390"/>
    </location>
    <ligand>
        <name>substrate</name>
    </ligand>
</feature>
<feature type="binding site" evidence="1">
    <location>
        <position position="503"/>
    </location>
    <ligand>
        <name>substrate</name>
    </ligand>
</feature>
<feature type="binding site" evidence="1">
    <location>
        <position position="505"/>
    </location>
    <ligand>
        <name>substrate</name>
    </ligand>
</feature>
<feature type="site" description="Transition state stabilizer" evidence="1">
    <location>
        <position position="412"/>
    </location>
</feature>
<feature type="glycosylation site" description="N-linked (GlcNAc...) asparagine" evidence="2">
    <location>
        <position position="86"/>
    </location>
</feature>
<feature type="glycosylation site" description="N-linked (GlcNAc...) asparagine" evidence="2">
    <location>
        <position position="206"/>
    </location>
</feature>
<feature type="glycosylation site" description="N-linked (GlcNAc...) asparagine" evidence="2">
    <location>
        <position position="349"/>
    </location>
</feature>
<feature type="sequence conflict" description="In Ref. 1; AAV91508." evidence="9" ref="1">
    <original>D</original>
    <variation>V</variation>
    <location>
        <position position="50"/>
    </location>
</feature>
<feature type="sequence conflict" description="In Ref. 2; CAB58974." evidence="9" ref="2">
    <original>G</original>
    <variation>E</variation>
    <location>
        <position position="93"/>
    </location>
</feature>
<feature type="sequence conflict" description="In Ref. 1; AAV91508." evidence="9" ref="1">
    <original>K</original>
    <variation>E</variation>
    <location>
        <position position="138"/>
    </location>
</feature>
<feature type="sequence conflict" description="In Ref. 1; AAV91508 and 2; CAB58974." evidence="9" ref="1 2">
    <original>T</original>
    <variation>A</variation>
    <location>
        <position position="267"/>
    </location>
</feature>
<feature type="sequence conflict" description="In Ref. 1; AAV91508." evidence="9" ref="1">
    <original>K</original>
    <variation>Q</variation>
    <location>
        <position position="537"/>
    </location>
</feature>
<feature type="sequence conflict" description="In Ref. 1; AAV91508." evidence="9" ref="1">
    <original>N</original>
    <variation>S</variation>
    <location>
        <position position="545"/>
    </location>
</feature>
<comment type="function">
    <text evidence="5 8">Acts in the modification of cell walls via demethylesterification of cell wall pectin. Plays an important role in growth of pollen tubes in female floral tissues, possibly via enhancing the interaction between the pollen tube and female floral tissues by modification of the cell walls (PubMed:15659637). May be regulated by MYB80 during anther development and play a role in tapetum and pollen development (PubMed:21673079).</text>
</comment>
<comment type="catalytic activity">
    <reaction evidence="5">
        <text>[(1-&gt;4)-alpha-D-galacturonosyl methyl ester](n) + n H2O = [(1-&gt;4)-alpha-D-galacturonosyl](n) + n methanol + n H(+)</text>
        <dbReference type="Rhea" id="RHEA:22380"/>
        <dbReference type="Rhea" id="RHEA-COMP:14570"/>
        <dbReference type="Rhea" id="RHEA-COMP:14573"/>
        <dbReference type="ChEBI" id="CHEBI:15377"/>
        <dbReference type="ChEBI" id="CHEBI:15378"/>
        <dbReference type="ChEBI" id="CHEBI:17790"/>
        <dbReference type="ChEBI" id="CHEBI:140522"/>
        <dbReference type="ChEBI" id="CHEBI:140523"/>
        <dbReference type="EC" id="3.1.1.11"/>
    </reaction>
    <physiologicalReaction direction="left-to-right" evidence="10">
        <dbReference type="Rhea" id="RHEA:22381"/>
    </physiologicalReaction>
</comment>
<comment type="pathway">
    <text>Glycan metabolism; pectin degradation; 2-dehydro-3-deoxy-D-gluconate from pectin: step 1/5.</text>
</comment>
<comment type="subunit">
    <text evidence="7">Interacts with SBT6.1.</text>
</comment>
<comment type="subcellular location">
    <subcellularLocation>
        <location evidence="5">Cell membrane</location>
    </subcellularLocation>
    <subcellularLocation>
        <location evidence="5">Secreted</location>
        <location evidence="5">Cell wall</location>
    </subcellularLocation>
    <subcellularLocation>
        <location evidence="7">Golgi apparatus membrane</location>
    </subcellularLocation>
    <text evidence="5 7">Distributed in the whole pollen tube, including the plasma membrane and pollen tube wall (PubMed:15659637). Cleaved in the Golgi apparatus by SBT6.1 (S1P) after the Arg-Arg-Leu-Leu (RRLL) and Arg-Lys-Leu-Met (RKLM) motifs. This processing is required for extracellular targeting (PubMed:19144003).</text>
</comment>
<comment type="tissue specificity">
    <text evidence="5">Expressed in pollen grains and pollen tubes.</text>
</comment>
<comment type="developmental stage">
    <text evidence="6 8">Expressed throughout silique development (PubMed:16622707). During anther development, expressed from stage 9 to stage 11 in late tapetum, and mature pollen grains (PubMed:21673079).</text>
</comment>
<comment type="domain">
    <text evidence="11">The PMEI region may act as an autoinhibitory domain and prevent untimely PME activity during transport. The PMEI region is cleaved by SBT6.1 (S1P) in the Golgi apparatus prior to cell wall targeting.</text>
</comment>
<comment type="similarity">
    <text evidence="9">In the N-terminal section; belongs to the PMEI family.</text>
</comment>
<comment type="similarity">
    <text evidence="9">In the C-terminal section; belongs to the pectinesterase family.</text>
</comment>
<comment type="online information" name="Protein Spotlight">
    <link uri="https://www.proteinspotlight.org/back_issues/106"/>
    <text>When tough is soft - Issue 106 of June 2009</text>
</comment>
<organism>
    <name type="scientific">Arabidopsis thaliana</name>
    <name type="common">Mouse-ear cress</name>
    <dbReference type="NCBI Taxonomy" id="3702"/>
    <lineage>
        <taxon>Eukaryota</taxon>
        <taxon>Viridiplantae</taxon>
        <taxon>Streptophyta</taxon>
        <taxon>Embryophyta</taxon>
        <taxon>Tracheophyta</taxon>
        <taxon>Spermatophyta</taxon>
        <taxon>Magnoliopsida</taxon>
        <taxon>eudicotyledons</taxon>
        <taxon>Gunneridae</taxon>
        <taxon>Pentapetalae</taxon>
        <taxon>rosids</taxon>
        <taxon>malvids</taxon>
        <taxon>Brassicales</taxon>
        <taxon>Brassicaceae</taxon>
        <taxon>Camelineae</taxon>
        <taxon>Arabidopsis</taxon>
    </lineage>
</organism>
<keyword id="KW-0063">Aspartyl esterase</keyword>
<keyword id="KW-1003">Cell membrane</keyword>
<keyword id="KW-0134">Cell wall</keyword>
<keyword id="KW-0961">Cell wall biogenesis/degradation</keyword>
<keyword id="KW-0325">Glycoprotein</keyword>
<keyword id="KW-0333">Golgi apparatus</keyword>
<keyword id="KW-0378">Hydrolase</keyword>
<keyword id="KW-0472">Membrane</keyword>
<keyword id="KW-1185">Reference proteome</keyword>
<keyword id="KW-0964">Secreted</keyword>
<keyword id="KW-0732">Signal</keyword>
<reference key="1">
    <citation type="journal article" date="2005" name="Plant Cell">
        <title>VANGUARD1 encodes a pectin methylesterase that enhances pollen tube growth in the Arabidopsis style and transmitting tract.</title>
        <authorList>
            <person name="Jiang L."/>
            <person name="Yang S.-L."/>
            <person name="Xie L.-F."/>
            <person name="Puah C.S."/>
            <person name="Zhang X.-Q."/>
            <person name="Yang W.-C."/>
            <person name="Sundaresan V."/>
            <person name="Ye D."/>
        </authorList>
    </citation>
    <scope>NUCLEOTIDE SEQUENCE [MRNA]</scope>
    <scope>FUNCTION</scope>
    <scope>CATALYTIC ACTIVITY</scope>
    <scope>TISSUE SPECIFICITY</scope>
    <scope>SUBCELLULAR LOCATION</scope>
    <source>
        <strain>cv. Landsberg erecta</strain>
    </source>
</reference>
<reference key="2">
    <citation type="submission" date="1999-10" db="EMBL/GenBank/DDBJ databases">
        <title>Characterization of a flower-specific gene encoding pectin methylesterase in Arabidopsis thaliana.</title>
        <authorList>
            <person name="Torki M."/>
            <person name="Mache R."/>
            <person name="Mandaron P."/>
            <person name="Falconet D."/>
        </authorList>
    </citation>
    <scope>NUCLEOTIDE SEQUENCE [MRNA]</scope>
    <source>
        <tissue>Flower bud</tissue>
    </source>
</reference>
<reference key="3">
    <citation type="journal article" date="1999" name="Nature">
        <title>Sequence and analysis of chromosome 2 of the plant Arabidopsis thaliana.</title>
        <authorList>
            <person name="Lin X."/>
            <person name="Kaul S."/>
            <person name="Rounsley S.D."/>
            <person name="Shea T.P."/>
            <person name="Benito M.-I."/>
            <person name="Town C.D."/>
            <person name="Fujii C.Y."/>
            <person name="Mason T.M."/>
            <person name="Bowman C.L."/>
            <person name="Barnstead M.E."/>
            <person name="Feldblyum T.V."/>
            <person name="Buell C.R."/>
            <person name="Ketchum K.A."/>
            <person name="Lee J.J."/>
            <person name="Ronning C.M."/>
            <person name="Koo H.L."/>
            <person name="Moffat K.S."/>
            <person name="Cronin L.A."/>
            <person name="Shen M."/>
            <person name="Pai G."/>
            <person name="Van Aken S."/>
            <person name="Umayam L."/>
            <person name="Tallon L.J."/>
            <person name="Gill J.E."/>
            <person name="Adams M.D."/>
            <person name="Carrera A.J."/>
            <person name="Creasy T.H."/>
            <person name="Goodman H.M."/>
            <person name="Somerville C.R."/>
            <person name="Copenhaver G.P."/>
            <person name="Preuss D."/>
            <person name="Nierman W.C."/>
            <person name="White O."/>
            <person name="Eisen J.A."/>
            <person name="Salzberg S.L."/>
            <person name="Fraser C.M."/>
            <person name="Venter J.C."/>
        </authorList>
    </citation>
    <scope>NUCLEOTIDE SEQUENCE [LARGE SCALE GENOMIC DNA]</scope>
    <source>
        <strain>cv. Columbia</strain>
    </source>
</reference>
<reference key="4">
    <citation type="journal article" date="2017" name="Plant J.">
        <title>Araport11: a complete reannotation of the Arabidopsis thaliana reference genome.</title>
        <authorList>
            <person name="Cheng C.Y."/>
            <person name="Krishnakumar V."/>
            <person name="Chan A.P."/>
            <person name="Thibaud-Nissen F."/>
            <person name="Schobel S."/>
            <person name="Town C.D."/>
        </authorList>
    </citation>
    <scope>GENOME REANNOTATION</scope>
    <source>
        <strain>cv. Columbia</strain>
    </source>
</reference>
<reference key="5">
    <citation type="journal article" date="2003" name="Science">
        <title>Empirical analysis of transcriptional activity in the Arabidopsis genome.</title>
        <authorList>
            <person name="Yamada K."/>
            <person name="Lim J."/>
            <person name="Dale J.M."/>
            <person name="Chen H."/>
            <person name="Shinn P."/>
            <person name="Palm C.J."/>
            <person name="Southwick A.M."/>
            <person name="Wu H.C."/>
            <person name="Kim C.J."/>
            <person name="Nguyen M."/>
            <person name="Pham P.K."/>
            <person name="Cheuk R.F."/>
            <person name="Karlin-Newmann G."/>
            <person name="Liu S.X."/>
            <person name="Lam B."/>
            <person name="Sakano H."/>
            <person name="Wu T."/>
            <person name="Yu G."/>
            <person name="Miranda M."/>
            <person name="Quach H.L."/>
            <person name="Tripp M."/>
            <person name="Chang C.H."/>
            <person name="Lee J.M."/>
            <person name="Toriumi M.J."/>
            <person name="Chan M.M."/>
            <person name="Tang C.C."/>
            <person name="Onodera C.S."/>
            <person name="Deng J.M."/>
            <person name="Akiyama K."/>
            <person name="Ansari Y."/>
            <person name="Arakawa T."/>
            <person name="Banh J."/>
            <person name="Banno F."/>
            <person name="Bowser L."/>
            <person name="Brooks S.Y."/>
            <person name="Carninci P."/>
            <person name="Chao Q."/>
            <person name="Choy N."/>
            <person name="Enju A."/>
            <person name="Goldsmith A.D."/>
            <person name="Gurjal M."/>
            <person name="Hansen N.F."/>
            <person name="Hayashizaki Y."/>
            <person name="Johnson-Hopson C."/>
            <person name="Hsuan V.W."/>
            <person name="Iida K."/>
            <person name="Karnes M."/>
            <person name="Khan S."/>
            <person name="Koesema E."/>
            <person name="Ishida J."/>
            <person name="Jiang P.X."/>
            <person name="Jones T."/>
            <person name="Kawai J."/>
            <person name="Kamiya A."/>
            <person name="Meyers C."/>
            <person name="Nakajima M."/>
            <person name="Narusaka M."/>
            <person name="Seki M."/>
            <person name="Sakurai T."/>
            <person name="Satou M."/>
            <person name="Tamse R."/>
            <person name="Vaysberg M."/>
            <person name="Wallender E.K."/>
            <person name="Wong C."/>
            <person name="Yamamura Y."/>
            <person name="Yuan S."/>
            <person name="Shinozaki K."/>
            <person name="Davis R.W."/>
            <person name="Theologis A."/>
            <person name="Ecker J.R."/>
        </authorList>
    </citation>
    <scope>NUCLEOTIDE SEQUENCE [LARGE SCALE MRNA]</scope>
    <source>
        <strain>cv. Columbia</strain>
    </source>
</reference>
<reference key="6">
    <citation type="journal article" date="2004" name="Carbohydr. Res.">
        <title>Pectin methylesterases: sequence-structural features and phylogenetic relationships.</title>
        <authorList>
            <person name="Markovic O."/>
            <person name="Janecek S."/>
        </authorList>
    </citation>
    <scope>GENE FAMILY</scope>
    <scope>NOMENCLATURE</scope>
</reference>
<reference key="7">
    <citation type="journal article" date="2006" name="Planta">
        <title>Comprehensive expression profiling of the pectin methylesterase gene family during silique development in Arabidopsis thaliana.</title>
        <authorList>
            <person name="Louvet R."/>
            <person name="Cavel E."/>
            <person name="Gutierrez L."/>
            <person name="Guenin S."/>
            <person name="Roger D."/>
            <person name="Gillet F."/>
            <person name="Guerineau F."/>
            <person name="Pelloux J."/>
        </authorList>
    </citation>
    <scope>DEVELOPMENTAL STAGE</scope>
</reference>
<reference key="8">
    <citation type="journal article" date="2009" name="Plant J.">
        <title>The N-terminal pro region mediates retention of unprocessed type-I PME in the Golgi apparatus.</title>
        <authorList>
            <person name="Wolf S."/>
            <person name="Rausch T."/>
            <person name="Greiner S."/>
        </authorList>
    </citation>
    <scope>INTERACTION WITH SBT6.1</scope>
    <scope>SUBCELLULAR LOCATION</scope>
    <scope>DOMAIN</scope>
    <scope>CLEAVAGE BY SBT6.1</scope>
</reference>
<reference key="9">
    <citation type="journal article" date="2011" name="Plant Cell">
        <title>The MYB80 transcription factor is required for pollen development and the regulation of tapetal programmed cell death in Arabidopsis thaliana.</title>
        <authorList>
            <person name="Phan H.A."/>
            <person name="Iacuone S."/>
            <person name="Li S.F."/>
            <person name="Parish R.W."/>
        </authorList>
    </citation>
    <scope>FUNCTION</scope>
    <scope>DEVELOPMENTAL STAGE</scope>
</reference>
<name>PME5_ARATH</name>
<sequence>MIGKVVVSVASILLIVGVAIGVVAYINKNGDANLSPQMKAVRGICEATSDKASCVKTLEPVKSDDPNKLIKAFMLATRDAITQSSNFTGKTEGNLGSGISPNNKAVLDYCKKVFMYALEDLSTIVEEMGEDLNQIGSKIDQLKQWLTGVYNYQTDCLDDIEEDDLRKTIGEGIASSKILTSNAIDIFHTVVSAMAKLNLKVEDFKNMTGGIFAPSDKGAAPVNKGTPPVADDSPVADPDGPARRLLEDIDETGIPTWVSGADRKLMTKAGRGSNDGGARIRATFVVAKDGSGQFKTVQQAVNACPEKNPGRCIIHIKAGIYREQVIIPKKKNNIFMFGDGARKTVISYNRSVKLSPGTTTSLSGTVQVESEGFMAKWIGFKNTAGPMGHQAVAIRVNGDRAVIFNCRFDGYQDTLYVNNGRQFYRNIVVSGTVDFIFGKSATVIQNSLIVVRKGNKGQFNTVTADGNEKGLAMKIGIVLQNCRIVPDKKLAAERLIVESYLGRPWKKFSTTVIINSEIGDVIRPEGWKIWDGESFHKSCRYVEYNNRGPGAITNRRVNWVKIARSAAEVNDFTVANWLGPINWIQEANVPVTLGL</sequence>